<dbReference type="EMBL" id="CP000687">
    <property type="protein sequence ID" value="ABY70050.1"/>
    <property type="molecule type" value="Genomic_DNA"/>
</dbReference>
<dbReference type="RefSeq" id="WP_005598703.1">
    <property type="nucleotide sequence ID" value="NC_010278.1"/>
</dbReference>
<dbReference type="SMR" id="B0BR65"/>
<dbReference type="GeneID" id="92744016"/>
<dbReference type="KEGG" id="apj:APJL_1498"/>
<dbReference type="HOGENOM" id="CLU_159258_1_0_6"/>
<dbReference type="Proteomes" id="UP000008547">
    <property type="component" value="Chromosome"/>
</dbReference>
<dbReference type="GO" id="GO:1990904">
    <property type="term" value="C:ribonucleoprotein complex"/>
    <property type="evidence" value="ECO:0007669"/>
    <property type="project" value="UniProtKB-KW"/>
</dbReference>
<dbReference type="GO" id="GO:0005840">
    <property type="term" value="C:ribosome"/>
    <property type="evidence" value="ECO:0007669"/>
    <property type="project" value="UniProtKB-KW"/>
</dbReference>
<dbReference type="GO" id="GO:0003735">
    <property type="term" value="F:structural constituent of ribosome"/>
    <property type="evidence" value="ECO:0007669"/>
    <property type="project" value="InterPro"/>
</dbReference>
<dbReference type="GO" id="GO:0006412">
    <property type="term" value="P:translation"/>
    <property type="evidence" value="ECO:0007669"/>
    <property type="project" value="UniProtKB-UniRule"/>
</dbReference>
<dbReference type="Gene3D" id="1.20.5.1150">
    <property type="entry name" value="Ribosomal protein S8"/>
    <property type="match status" value="1"/>
</dbReference>
<dbReference type="HAMAP" id="MF_00358">
    <property type="entry name" value="Ribosomal_bS21"/>
    <property type="match status" value="1"/>
</dbReference>
<dbReference type="InterPro" id="IPR001911">
    <property type="entry name" value="Ribosomal_bS21"/>
</dbReference>
<dbReference type="InterPro" id="IPR018278">
    <property type="entry name" value="Ribosomal_bS21_CS"/>
</dbReference>
<dbReference type="InterPro" id="IPR038380">
    <property type="entry name" value="Ribosomal_bS21_sf"/>
</dbReference>
<dbReference type="NCBIfam" id="TIGR00030">
    <property type="entry name" value="S21p"/>
    <property type="match status" value="1"/>
</dbReference>
<dbReference type="PANTHER" id="PTHR21109">
    <property type="entry name" value="MITOCHONDRIAL 28S RIBOSOMAL PROTEIN S21"/>
    <property type="match status" value="1"/>
</dbReference>
<dbReference type="PANTHER" id="PTHR21109:SF22">
    <property type="entry name" value="SMALL RIBOSOMAL SUBUNIT PROTEIN BS21"/>
    <property type="match status" value="1"/>
</dbReference>
<dbReference type="Pfam" id="PF01165">
    <property type="entry name" value="Ribosomal_S21"/>
    <property type="match status" value="1"/>
</dbReference>
<dbReference type="PRINTS" id="PR00976">
    <property type="entry name" value="RIBOSOMALS21"/>
</dbReference>
<dbReference type="PROSITE" id="PS01181">
    <property type="entry name" value="RIBOSOMAL_S21"/>
    <property type="match status" value="1"/>
</dbReference>
<name>RS21_ACTPJ</name>
<comment type="similarity">
    <text evidence="1">Belongs to the bacterial ribosomal protein bS21 family.</text>
</comment>
<feature type="chain" id="PRO_1000120578" description="Small ribosomal subunit protein bS21">
    <location>
        <begin position="1"/>
        <end position="71"/>
    </location>
</feature>
<feature type="region of interest" description="Disordered" evidence="2">
    <location>
        <begin position="48"/>
        <end position="71"/>
    </location>
</feature>
<feature type="compositionally biased region" description="Basic residues" evidence="2">
    <location>
        <begin position="48"/>
        <end position="59"/>
    </location>
</feature>
<feature type="compositionally biased region" description="Basic and acidic residues" evidence="2">
    <location>
        <begin position="60"/>
        <end position="71"/>
    </location>
</feature>
<gene>
    <name evidence="1" type="primary">rpsU</name>
    <name type="ordered locus">APJL_1498</name>
</gene>
<keyword id="KW-0687">Ribonucleoprotein</keyword>
<keyword id="KW-0689">Ribosomal protein</keyword>
<accession>B0BR65</accession>
<proteinExistence type="inferred from homology"/>
<evidence type="ECO:0000255" key="1">
    <source>
        <dbReference type="HAMAP-Rule" id="MF_00358"/>
    </source>
</evidence>
<evidence type="ECO:0000256" key="2">
    <source>
        <dbReference type="SAM" id="MobiDB-lite"/>
    </source>
</evidence>
<evidence type="ECO:0000305" key="3"/>
<reference key="1">
    <citation type="journal article" date="2008" name="PLoS ONE">
        <title>Genome biology of Actinobacillus pleuropneumoniae JL03, an isolate of serotype 3 prevalent in China.</title>
        <authorList>
            <person name="Xu Z."/>
            <person name="Zhou Y."/>
            <person name="Li L."/>
            <person name="Zhou R."/>
            <person name="Xiao S."/>
            <person name="Wan Y."/>
            <person name="Zhang S."/>
            <person name="Wang K."/>
            <person name="Li W."/>
            <person name="Li L."/>
            <person name="Jin H."/>
            <person name="Kang M."/>
            <person name="Dalai B."/>
            <person name="Li T."/>
            <person name="Liu L."/>
            <person name="Cheng Y."/>
            <person name="Zhang L."/>
            <person name="Xu T."/>
            <person name="Zheng H."/>
            <person name="Pu S."/>
            <person name="Wang B."/>
            <person name="Gu W."/>
            <person name="Zhang X.L."/>
            <person name="Zhu G.-F."/>
            <person name="Wang S."/>
            <person name="Zhao G.-P."/>
            <person name="Chen H."/>
        </authorList>
    </citation>
    <scope>NUCLEOTIDE SEQUENCE [LARGE SCALE GENOMIC DNA]</scope>
    <source>
        <strain>JL03</strain>
    </source>
</reference>
<sequence length="71" mass="8462">MPVIKVRENESFDVALRRFKRSCEKAGLLAEVRAREFYEKPTTIRKREKASLAKRHAKRNARENARNTRLY</sequence>
<organism>
    <name type="scientific">Actinobacillus pleuropneumoniae serotype 3 (strain JL03)</name>
    <dbReference type="NCBI Taxonomy" id="434271"/>
    <lineage>
        <taxon>Bacteria</taxon>
        <taxon>Pseudomonadati</taxon>
        <taxon>Pseudomonadota</taxon>
        <taxon>Gammaproteobacteria</taxon>
        <taxon>Pasteurellales</taxon>
        <taxon>Pasteurellaceae</taxon>
        <taxon>Actinobacillus</taxon>
    </lineage>
</organism>
<protein>
    <recommendedName>
        <fullName evidence="1">Small ribosomal subunit protein bS21</fullName>
    </recommendedName>
    <alternativeName>
        <fullName evidence="3">30S ribosomal protein S21</fullName>
    </alternativeName>
</protein>